<dbReference type="EC" id="1.16.3.1"/>
<dbReference type="SMR" id="P85839"/>
<dbReference type="GO" id="GO:0005737">
    <property type="term" value="C:cytoplasm"/>
    <property type="evidence" value="ECO:0007669"/>
    <property type="project" value="TreeGrafter"/>
</dbReference>
<dbReference type="GO" id="GO:0008199">
    <property type="term" value="F:ferric iron binding"/>
    <property type="evidence" value="ECO:0007669"/>
    <property type="project" value="InterPro"/>
</dbReference>
<dbReference type="GO" id="GO:0008198">
    <property type="term" value="F:ferrous iron binding"/>
    <property type="evidence" value="ECO:0007669"/>
    <property type="project" value="TreeGrafter"/>
</dbReference>
<dbReference type="GO" id="GO:0004322">
    <property type="term" value="F:ferroxidase activity"/>
    <property type="evidence" value="ECO:0007669"/>
    <property type="project" value="UniProtKB-EC"/>
</dbReference>
<dbReference type="GO" id="GO:0006879">
    <property type="term" value="P:intracellular iron ion homeostasis"/>
    <property type="evidence" value="ECO:0007669"/>
    <property type="project" value="UniProtKB-KW"/>
</dbReference>
<dbReference type="GO" id="GO:0006826">
    <property type="term" value="P:iron ion transport"/>
    <property type="evidence" value="ECO:0007669"/>
    <property type="project" value="InterPro"/>
</dbReference>
<dbReference type="CDD" id="cd01056">
    <property type="entry name" value="Euk_Ferritin"/>
    <property type="match status" value="1"/>
</dbReference>
<dbReference type="FunFam" id="1.20.1260.10:FF:000002">
    <property type="entry name" value="Ferritin, mitochondrial"/>
    <property type="match status" value="1"/>
</dbReference>
<dbReference type="Gene3D" id="1.20.1260.10">
    <property type="match status" value="1"/>
</dbReference>
<dbReference type="InterPro" id="IPR001519">
    <property type="entry name" value="Ferritin"/>
</dbReference>
<dbReference type="InterPro" id="IPR012347">
    <property type="entry name" value="Ferritin-like"/>
</dbReference>
<dbReference type="InterPro" id="IPR009040">
    <property type="entry name" value="Ferritin-like_diiron"/>
</dbReference>
<dbReference type="InterPro" id="IPR009078">
    <property type="entry name" value="Ferritin-like_SF"/>
</dbReference>
<dbReference type="InterPro" id="IPR014034">
    <property type="entry name" value="Ferritin_CS"/>
</dbReference>
<dbReference type="InterPro" id="IPR008331">
    <property type="entry name" value="Ferritin_DPS_dom"/>
</dbReference>
<dbReference type="PANTHER" id="PTHR11431">
    <property type="entry name" value="FERRITIN"/>
    <property type="match status" value="1"/>
</dbReference>
<dbReference type="PANTHER" id="PTHR11431:SF54">
    <property type="entry name" value="FERRITIN"/>
    <property type="match status" value="1"/>
</dbReference>
<dbReference type="Pfam" id="PF00210">
    <property type="entry name" value="Ferritin"/>
    <property type="match status" value="1"/>
</dbReference>
<dbReference type="SUPFAM" id="SSF47240">
    <property type="entry name" value="Ferritin-like"/>
    <property type="match status" value="1"/>
</dbReference>
<dbReference type="PROSITE" id="PS00204">
    <property type="entry name" value="FERRITIN_2"/>
    <property type="match status" value="1"/>
</dbReference>
<dbReference type="PROSITE" id="PS50905">
    <property type="entry name" value="FERRITIN_LIKE"/>
    <property type="match status" value="1"/>
</dbReference>
<name>FRIMS_TREBE</name>
<keyword id="KW-0903">Direct protein sequencing</keyword>
<keyword id="KW-0408">Iron</keyword>
<keyword id="KW-0409">Iron storage</keyword>
<keyword id="KW-0479">Metal-binding</keyword>
<keyword id="KW-0560">Oxidoreductase</keyword>
<evidence type="ECO:0000250" key="1">
    <source>
        <dbReference type="UniProtKB" id="P07798"/>
    </source>
</evidence>
<evidence type="ECO:0000255" key="2"/>
<evidence type="ECO:0000255" key="3">
    <source>
        <dbReference type="PROSITE-ProRule" id="PRU00085"/>
    </source>
</evidence>
<evidence type="ECO:0000269" key="4">
    <source>
    </source>
</evidence>
<evidence type="ECO:0000269" key="5">
    <source>
    </source>
</evidence>
<evidence type="ECO:0000303" key="6">
    <source>
    </source>
</evidence>
<evidence type="ECO:0000303" key="7">
    <source>
    </source>
</evidence>
<evidence type="ECO:0000305" key="8"/>
<proteinExistence type="evidence at protein level"/>
<reference evidence="8" key="1">
    <citation type="journal article" date="2002" name="Eur. J. Biochem.">
        <title>Ferritin from the spleen of the Antarctic teleost Trematomus bernacchii is an M-type homopolymer.</title>
        <authorList>
            <person name="Mignogna G."/>
            <person name="Chiaraluce R."/>
            <person name="Consalvi V."/>
            <person name="Cavallo S."/>
            <person name="Stefanini S."/>
            <person name="Chiancone E."/>
        </authorList>
    </citation>
    <scope>PROTEIN SEQUENCE</scope>
    <scope>CATALYTIC ACTIVITY</scope>
    <scope>BIOPHYSICOCHEMICAL PROPERTIES</scope>
    <scope>SUBUNIT</scope>
    <scope>TISSUE SPECIFICITY</scope>
    <source>
        <tissue evidence="4">Spleen</tissue>
    </source>
</reference>
<reference evidence="8" key="2">
    <citation type="journal article" date="2008" name="Arch. Biochem. Biophys.">
        <title>The unusual co-assembly of H- and M-chains in the ferritin molecule from the Antarctic teleosts Trematomus bernacchii and Trematomus newnesi.</title>
        <authorList>
            <person name="Giorgi A."/>
            <person name="Mignogna G."/>
            <person name="Bellapadrona G."/>
            <person name="Gattoni M."/>
            <person name="Chiaraluce R."/>
            <person name="Consalvi V."/>
            <person name="Chiancone E."/>
            <person name="Stefanini S."/>
        </authorList>
    </citation>
    <scope>PROTEIN SEQUENCE</scope>
    <scope>CATALYTIC ACTIVITY</scope>
    <scope>SUBUNIT</scope>
    <scope>TISSUE SPECIFICITY</scope>
    <source>
        <tissue evidence="5">Spleen</tissue>
    </source>
</reference>
<sequence>MDSQVRQNYHRDCEAAVNRMINMELFASYSYTSMAFYFSRDDVALPGFAHFFKENSDEEREHADKLLTFQNSRGGRIFLQDIKKPERDEWGNGVDVMQCALQLEKNVNQALLDLHKIASGKVDPHMCDFLETHYLNEQVESIKKLGDFITNLSRMDAVKNKMAEYLFDKHTMGGKN</sequence>
<comment type="function">
    <text evidence="1">Stores iron in a soluble, non-toxic, readily available form. Important for iron homeostasis. Has ferroxidase activity. Iron is taken up in the ferrous form and deposited as ferric hydroxides after oxidation (By similarity).</text>
</comment>
<comment type="catalytic activity">
    <reaction evidence="4 5">
        <text>4 Fe(2+) + O2 + 4 H(+) = 4 Fe(3+) + 2 H2O</text>
        <dbReference type="Rhea" id="RHEA:11148"/>
        <dbReference type="ChEBI" id="CHEBI:15377"/>
        <dbReference type="ChEBI" id="CHEBI:15378"/>
        <dbReference type="ChEBI" id="CHEBI:15379"/>
        <dbReference type="ChEBI" id="CHEBI:29033"/>
        <dbReference type="ChEBI" id="CHEBI:29034"/>
        <dbReference type="EC" id="1.16.3.1"/>
    </reaction>
</comment>
<comment type="biophysicochemical properties">
    <phDependence>
        <text evidence="4">Stable at acidic pHs.</text>
    </phDependence>
    <temperatureDependence>
        <text evidence="4">Thermostable.</text>
    </temperatureDependence>
</comment>
<comment type="subunit">
    <text evidence="4 5 8">In spleen, forms a homomer. The functional molecule forms a roughly spherical shell with a diameter of 12 nm and contains a central cavity into which the insoluble mineral iron core is deposited.</text>
</comment>
<comment type="tissue specificity">
    <text evidence="4 5">Spleen (at protein level).</text>
</comment>
<comment type="similarity">
    <text evidence="2">Belongs to the ferritin family.</text>
</comment>
<feature type="chain" id="PRO_0000343460" description="Ferritin, spleen middle subunit">
    <location>
        <begin position="1"/>
        <end position="176"/>
    </location>
</feature>
<feature type="domain" description="Ferritin-like diiron" evidence="3">
    <location>
        <begin position="7"/>
        <end position="156"/>
    </location>
</feature>
<feature type="binding site" evidence="1 3">
    <location>
        <position position="24"/>
    </location>
    <ligand>
        <name>Fe cation</name>
        <dbReference type="ChEBI" id="CHEBI:24875"/>
        <label>1</label>
    </ligand>
</feature>
<feature type="binding site" evidence="1 3">
    <location>
        <position position="59"/>
    </location>
    <ligand>
        <name>Fe cation</name>
        <dbReference type="ChEBI" id="CHEBI:24875"/>
        <label>1</label>
    </ligand>
</feature>
<feature type="binding site" evidence="1 3">
    <location>
        <position position="59"/>
    </location>
    <ligand>
        <name>Fe cation</name>
        <dbReference type="ChEBI" id="CHEBI:24875"/>
        <label>2</label>
    </ligand>
</feature>
<feature type="binding site" evidence="1 3">
    <location>
        <position position="62"/>
    </location>
    <ligand>
        <name>Fe cation</name>
        <dbReference type="ChEBI" id="CHEBI:24875"/>
        <label>1</label>
    </ligand>
</feature>
<feature type="binding site" evidence="1 3">
    <location>
        <position position="104"/>
    </location>
    <ligand>
        <name>Fe cation</name>
        <dbReference type="ChEBI" id="CHEBI:24875"/>
        <label>2</label>
    </ligand>
</feature>
<feature type="binding site" evidence="1 3">
    <location>
        <position position="138"/>
    </location>
    <ligand>
        <name>Fe cation</name>
        <dbReference type="ChEBI" id="CHEBI:24875"/>
        <label>2</label>
    </ligand>
</feature>
<protein>
    <recommendedName>
        <fullName evidence="6 7">Ferritin, spleen middle subunit</fullName>
        <shortName evidence="6 7">Ferritin M</shortName>
        <ecNumber>1.16.3.1</ecNumber>
    </recommendedName>
</protein>
<organism>
    <name type="scientific">Trematomus bernacchii</name>
    <name type="common">Emerald rockcod</name>
    <name type="synonym">Pseudotrematomus bernacchii</name>
    <dbReference type="NCBI Taxonomy" id="40690"/>
    <lineage>
        <taxon>Eukaryota</taxon>
        <taxon>Metazoa</taxon>
        <taxon>Chordata</taxon>
        <taxon>Craniata</taxon>
        <taxon>Vertebrata</taxon>
        <taxon>Euteleostomi</taxon>
        <taxon>Actinopterygii</taxon>
        <taxon>Neopterygii</taxon>
        <taxon>Teleostei</taxon>
        <taxon>Neoteleostei</taxon>
        <taxon>Acanthomorphata</taxon>
        <taxon>Eupercaria</taxon>
        <taxon>Perciformes</taxon>
        <taxon>Notothenioidei</taxon>
        <taxon>Nototheniidae</taxon>
        <taxon>Trematomus</taxon>
    </lineage>
</organism>
<accession>P85839</accession>